<gene>
    <name evidence="1" type="primary">pyrG</name>
    <name type="ordered locus">Desal_2261</name>
</gene>
<proteinExistence type="inferred from homology"/>
<evidence type="ECO:0000255" key="1">
    <source>
        <dbReference type="HAMAP-Rule" id="MF_01227"/>
    </source>
</evidence>
<dbReference type="EC" id="6.3.4.2" evidence="1"/>
<dbReference type="EMBL" id="CP001649">
    <property type="protein sequence ID" value="ACS80317.1"/>
    <property type="molecule type" value="Genomic_DNA"/>
</dbReference>
<dbReference type="RefSeq" id="WP_015852133.1">
    <property type="nucleotide sequence ID" value="NC_012881.1"/>
</dbReference>
<dbReference type="SMR" id="C6BWN7"/>
<dbReference type="STRING" id="526222.Desal_2261"/>
<dbReference type="MEROPS" id="C26.964"/>
<dbReference type="KEGG" id="dsa:Desal_2261"/>
<dbReference type="eggNOG" id="COG0504">
    <property type="taxonomic scope" value="Bacteria"/>
</dbReference>
<dbReference type="HOGENOM" id="CLU_011675_5_0_7"/>
<dbReference type="OrthoDB" id="9801107at2"/>
<dbReference type="UniPathway" id="UPA00159">
    <property type="reaction ID" value="UER00277"/>
</dbReference>
<dbReference type="Proteomes" id="UP000002601">
    <property type="component" value="Chromosome"/>
</dbReference>
<dbReference type="GO" id="GO:0005829">
    <property type="term" value="C:cytosol"/>
    <property type="evidence" value="ECO:0007669"/>
    <property type="project" value="TreeGrafter"/>
</dbReference>
<dbReference type="GO" id="GO:0005524">
    <property type="term" value="F:ATP binding"/>
    <property type="evidence" value="ECO:0007669"/>
    <property type="project" value="UniProtKB-KW"/>
</dbReference>
<dbReference type="GO" id="GO:0003883">
    <property type="term" value="F:CTP synthase activity"/>
    <property type="evidence" value="ECO:0007669"/>
    <property type="project" value="UniProtKB-UniRule"/>
</dbReference>
<dbReference type="GO" id="GO:0004359">
    <property type="term" value="F:glutaminase activity"/>
    <property type="evidence" value="ECO:0007669"/>
    <property type="project" value="RHEA"/>
</dbReference>
<dbReference type="GO" id="GO:0042802">
    <property type="term" value="F:identical protein binding"/>
    <property type="evidence" value="ECO:0007669"/>
    <property type="project" value="TreeGrafter"/>
</dbReference>
<dbReference type="GO" id="GO:0046872">
    <property type="term" value="F:metal ion binding"/>
    <property type="evidence" value="ECO:0007669"/>
    <property type="project" value="UniProtKB-KW"/>
</dbReference>
<dbReference type="GO" id="GO:0044210">
    <property type="term" value="P:'de novo' CTP biosynthetic process"/>
    <property type="evidence" value="ECO:0007669"/>
    <property type="project" value="UniProtKB-UniRule"/>
</dbReference>
<dbReference type="GO" id="GO:0019856">
    <property type="term" value="P:pyrimidine nucleobase biosynthetic process"/>
    <property type="evidence" value="ECO:0007669"/>
    <property type="project" value="TreeGrafter"/>
</dbReference>
<dbReference type="CDD" id="cd03113">
    <property type="entry name" value="CTPS_N"/>
    <property type="match status" value="1"/>
</dbReference>
<dbReference type="CDD" id="cd01746">
    <property type="entry name" value="GATase1_CTP_Synthase"/>
    <property type="match status" value="1"/>
</dbReference>
<dbReference type="FunFam" id="3.40.50.300:FF:000009">
    <property type="entry name" value="CTP synthase"/>
    <property type="match status" value="1"/>
</dbReference>
<dbReference type="FunFam" id="3.40.50.880:FF:000002">
    <property type="entry name" value="CTP synthase"/>
    <property type="match status" value="1"/>
</dbReference>
<dbReference type="Gene3D" id="3.40.50.880">
    <property type="match status" value="1"/>
</dbReference>
<dbReference type="Gene3D" id="3.40.50.300">
    <property type="entry name" value="P-loop containing nucleotide triphosphate hydrolases"/>
    <property type="match status" value="1"/>
</dbReference>
<dbReference type="HAMAP" id="MF_01227">
    <property type="entry name" value="PyrG"/>
    <property type="match status" value="1"/>
</dbReference>
<dbReference type="InterPro" id="IPR029062">
    <property type="entry name" value="Class_I_gatase-like"/>
</dbReference>
<dbReference type="InterPro" id="IPR004468">
    <property type="entry name" value="CTP_synthase"/>
</dbReference>
<dbReference type="InterPro" id="IPR017456">
    <property type="entry name" value="CTP_synthase_N"/>
</dbReference>
<dbReference type="InterPro" id="IPR017926">
    <property type="entry name" value="GATASE"/>
</dbReference>
<dbReference type="InterPro" id="IPR033828">
    <property type="entry name" value="GATase1_CTP_Synthase"/>
</dbReference>
<dbReference type="InterPro" id="IPR027417">
    <property type="entry name" value="P-loop_NTPase"/>
</dbReference>
<dbReference type="NCBIfam" id="NF003792">
    <property type="entry name" value="PRK05380.1"/>
    <property type="match status" value="1"/>
</dbReference>
<dbReference type="NCBIfam" id="TIGR00337">
    <property type="entry name" value="PyrG"/>
    <property type="match status" value="1"/>
</dbReference>
<dbReference type="PANTHER" id="PTHR11550">
    <property type="entry name" value="CTP SYNTHASE"/>
    <property type="match status" value="1"/>
</dbReference>
<dbReference type="PANTHER" id="PTHR11550:SF0">
    <property type="entry name" value="CTP SYNTHASE-RELATED"/>
    <property type="match status" value="1"/>
</dbReference>
<dbReference type="Pfam" id="PF06418">
    <property type="entry name" value="CTP_synth_N"/>
    <property type="match status" value="1"/>
</dbReference>
<dbReference type="Pfam" id="PF00117">
    <property type="entry name" value="GATase"/>
    <property type="match status" value="1"/>
</dbReference>
<dbReference type="SUPFAM" id="SSF52317">
    <property type="entry name" value="Class I glutamine amidotransferase-like"/>
    <property type="match status" value="1"/>
</dbReference>
<dbReference type="SUPFAM" id="SSF52540">
    <property type="entry name" value="P-loop containing nucleoside triphosphate hydrolases"/>
    <property type="match status" value="1"/>
</dbReference>
<dbReference type="PROSITE" id="PS51273">
    <property type="entry name" value="GATASE_TYPE_1"/>
    <property type="match status" value="1"/>
</dbReference>
<keyword id="KW-0067">ATP-binding</keyword>
<keyword id="KW-0315">Glutamine amidotransferase</keyword>
<keyword id="KW-0436">Ligase</keyword>
<keyword id="KW-0460">Magnesium</keyword>
<keyword id="KW-0479">Metal-binding</keyword>
<keyword id="KW-0547">Nucleotide-binding</keyword>
<keyword id="KW-0665">Pyrimidine biosynthesis</keyword>
<keyword id="KW-1185">Reference proteome</keyword>
<name>PYRG_MARSD</name>
<organism>
    <name type="scientific">Maridesulfovibrio salexigens (strain ATCC 14822 / DSM 2638 / NCIMB 8403 / VKM B-1763)</name>
    <name type="common">Desulfovibrio salexigens</name>
    <dbReference type="NCBI Taxonomy" id="526222"/>
    <lineage>
        <taxon>Bacteria</taxon>
        <taxon>Pseudomonadati</taxon>
        <taxon>Thermodesulfobacteriota</taxon>
        <taxon>Desulfovibrionia</taxon>
        <taxon>Desulfovibrionales</taxon>
        <taxon>Desulfovibrionaceae</taxon>
        <taxon>Maridesulfovibrio</taxon>
    </lineage>
</organism>
<feature type="chain" id="PRO_1000214010" description="CTP synthase">
    <location>
        <begin position="1"/>
        <end position="545"/>
    </location>
</feature>
<feature type="domain" description="Glutamine amidotransferase type-1" evidence="1">
    <location>
        <begin position="291"/>
        <end position="545"/>
    </location>
</feature>
<feature type="region of interest" description="Amidoligase domain" evidence="1">
    <location>
        <begin position="1"/>
        <end position="266"/>
    </location>
</feature>
<feature type="active site" description="Nucleophile; for glutamine hydrolysis" evidence="1">
    <location>
        <position position="380"/>
    </location>
</feature>
<feature type="active site" evidence="1">
    <location>
        <position position="518"/>
    </location>
</feature>
<feature type="active site" evidence="1">
    <location>
        <position position="520"/>
    </location>
</feature>
<feature type="binding site" evidence="1">
    <location>
        <position position="14"/>
    </location>
    <ligand>
        <name>CTP</name>
        <dbReference type="ChEBI" id="CHEBI:37563"/>
        <note>allosteric inhibitor</note>
    </ligand>
</feature>
<feature type="binding site" evidence="1">
    <location>
        <position position="14"/>
    </location>
    <ligand>
        <name>UTP</name>
        <dbReference type="ChEBI" id="CHEBI:46398"/>
    </ligand>
</feature>
<feature type="binding site" evidence="1">
    <location>
        <begin position="15"/>
        <end position="20"/>
    </location>
    <ligand>
        <name>ATP</name>
        <dbReference type="ChEBI" id="CHEBI:30616"/>
    </ligand>
</feature>
<feature type="binding site" evidence="1">
    <location>
        <position position="72"/>
    </location>
    <ligand>
        <name>ATP</name>
        <dbReference type="ChEBI" id="CHEBI:30616"/>
    </ligand>
</feature>
<feature type="binding site" evidence="1">
    <location>
        <position position="72"/>
    </location>
    <ligand>
        <name>Mg(2+)</name>
        <dbReference type="ChEBI" id="CHEBI:18420"/>
    </ligand>
</feature>
<feature type="binding site" evidence="1">
    <location>
        <position position="140"/>
    </location>
    <ligand>
        <name>Mg(2+)</name>
        <dbReference type="ChEBI" id="CHEBI:18420"/>
    </ligand>
</feature>
<feature type="binding site" evidence="1">
    <location>
        <begin position="147"/>
        <end position="149"/>
    </location>
    <ligand>
        <name>CTP</name>
        <dbReference type="ChEBI" id="CHEBI:37563"/>
        <note>allosteric inhibitor</note>
    </ligand>
</feature>
<feature type="binding site" evidence="1">
    <location>
        <begin position="187"/>
        <end position="192"/>
    </location>
    <ligand>
        <name>CTP</name>
        <dbReference type="ChEBI" id="CHEBI:37563"/>
        <note>allosteric inhibitor</note>
    </ligand>
</feature>
<feature type="binding site" evidence="1">
    <location>
        <begin position="187"/>
        <end position="192"/>
    </location>
    <ligand>
        <name>UTP</name>
        <dbReference type="ChEBI" id="CHEBI:46398"/>
    </ligand>
</feature>
<feature type="binding site" evidence="1">
    <location>
        <position position="223"/>
    </location>
    <ligand>
        <name>CTP</name>
        <dbReference type="ChEBI" id="CHEBI:37563"/>
        <note>allosteric inhibitor</note>
    </ligand>
</feature>
<feature type="binding site" evidence="1">
    <location>
        <position position="223"/>
    </location>
    <ligand>
        <name>UTP</name>
        <dbReference type="ChEBI" id="CHEBI:46398"/>
    </ligand>
</feature>
<feature type="binding site" evidence="1">
    <location>
        <position position="353"/>
    </location>
    <ligand>
        <name>L-glutamine</name>
        <dbReference type="ChEBI" id="CHEBI:58359"/>
    </ligand>
</feature>
<feature type="binding site" evidence="1">
    <location>
        <begin position="381"/>
        <end position="384"/>
    </location>
    <ligand>
        <name>L-glutamine</name>
        <dbReference type="ChEBI" id="CHEBI:58359"/>
    </ligand>
</feature>
<feature type="binding site" evidence="1">
    <location>
        <position position="404"/>
    </location>
    <ligand>
        <name>L-glutamine</name>
        <dbReference type="ChEBI" id="CHEBI:58359"/>
    </ligand>
</feature>
<feature type="binding site" evidence="1">
    <location>
        <position position="472"/>
    </location>
    <ligand>
        <name>L-glutamine</name>
        <dbReference type="ChEBI" id="CHEBI:58359"/>
    </ligand>
</feature>
<accession>C6BWN7</accession>
<reference key="1">
    <citation type="submission" date="2009-06" db="EMBL/GenBank/DDBJ databases">
        <title>Complete sequence of Desulfovibrio salexigens DSM 2638.</title>
        <authorList>
            <consortium name="US DOE Joint Genome Institute"/>
            <person name="Lucas S."/>
            <person name="Copeland A."/>
            <person name="Lapidus A."/>
            <person name="Glavina del Rio T."/>
            <person name="Tice H."/>
            <person name="Bruce D."/>
            <person name="Goodwin L."/>
            <person name="Pitluck S."/>
            <person name="Munk A.C."/>
            <person name="Brettin T."/>
            <person name="Detter J.C."/>
            <person name="Han C."/>
            <person name="Tapia R."/>
            <person name="Larimer F."/>
            <person name="Land M."/>
            <person name="Hauser L."/>
            <person name="Kyrpides N."/>
            <person name="Anderson I."/>
            <person name="Wall J.D."/>
            <person name="Arkin A.P."/>
            <person name="Dehal P."/>
            <person name="Chivian D."/>
            <person name="Giles B."/>
            <person name="Hazen T.C."/>
        </authorList>
    </citation>
    <scope>NUCLEOTIDE SEQUENCE [LARGE SCALE GENOMIC DNA]</scope>
    <source>
        <strain>ATCC 14822 / DSM 2638 / NCIMB 8403 / VKM B-1763</strain>
    </source>
</reference>
<sequence length="545" mass="60586">MKTKFIFITGGVLSSLGKGLAAASIGALLKARGMTATIQKLDPYINVDPGTMNPFQHGEVYVTDDGAETDLDLGHYERYLDVSLSQKNNMTSGRVYHNVITKERRGDYLGGTVQVIPHITDEIKNAVMNVPNGEDVALIEIGGTVGDIEGLPFLEAIRQLRSELGSENVLYIHLTLVPYLAAAGEVKTKPTQHSVKELRSIGIHPDIILCRSEVDLDEDIKRKIALFCDVDRDAVFTAVDVKSIYQLPLSFYNEGLDQKIAIMLKLPAKNCNLESWRKLNHTLENPTGETTIGIVGKYVDLKEAYKSLHEALIHGGVANEVKVNLRYVNSEEITPENVKEKLAGCDGVLVPGGFGNRGVEGKITAIQYARENKVPFFGICLGMQCAVIEYARNVMGLKGANSEEFNPEGDDNVIYLMKEWYDYRTKKTENRCEESDKGGTMRLGAYPCKVVEGTKAMAAYGKTEIQERHRHRYEFNKEKFADQLVEAGLVLSGLSPDEALVEIVEVADHPWFLGCQFHPEFKSNPMHAHPLFRDFIKASCENKNK</sequence>
<protein>
    <recommendedName>
        <fullName evidence="1">CTP synthase</fullName>
        <ecNumber evidence="1">6.3.4.2</ecNumber>
    </recommendedName>
    <alternativeName>
        <fullName evidence="1">Cytidine 5'-triphosphate synthase</fullName>
    </alternativeName>
    <alternativeName>
        <fullName evidence="1">Cytidine triphosphate synthetase</fullName>
        <shortName evidence="1">CTP synthetase</shortName>
        <shortName evidence="1">CTPS</shortName>
    </alternativeName>
    <alternativeName>
        <fullName evidence="1">UTP--ammonia ligase</fullName>
    </alternativeName>
</protein>
<comment type="function">
    <text evidence="1">Catalyzes the ATP-dependent amination of UTP to CTP with either L-glutamine or ammonia as the source of nitrogen. Regulates intracellular CTP levels through interactions with the four ribonucleotide triphosphates.</text>
</comment>
<comment type="catalytic activity">
    <reaction evidence="1">
        <text>UTP + L-glutamine + ATP + H2O = CTP + L-glutamate + ADP + phosphate + 2 H(+)</text>
        <dbReference type="Rhea" id="RHEA:26426"/>
        <dbReference type="ChEBI" id="CHEBI:15377"/>
        <dbReference type="ChEBI" id="CHEBI:15378"/>
        <dbReference type="ChEBI" id="CHEBI:29985"/>
        <dbReference type="ChEBI" id="CHEBI:30616"/>
        <dbReference type="ChEBI" id="CHEBI:37563"/>
        <dbReference type="ChEBI" id="CHEBI:43474"/>
        <dbReference type="ChEBI" id="CHEBI:46398"/>
        <dbReference type="ChEBI" id="CHEBI:58359"/>
        <dbReference type="ChEBI" id="CHEBI:456216"/>
        <dbReference type="EC" id="6.3.4.2"/>
    </reaction>
</comment>
<comment type="catalytic activity">
    <reaction evidence="1">
        <text>L-glutamine + H2O = L-glutamate + NH4(+)</text>
        <dbReference type="Rhea" id="RHEA:15889"/>
        <dbReference type="ChEBI" id="CHEBI:15377"/>
        <dbReference type="ChEBI" id="CHEBI:28938"/>
        <dbReference type="ChEBI" id="CHEBI:29985"/>
        <dbReference type="ChEBI" id="CHEBI:58359"/>
    </reaction>
</comment>
<comment type="catalytic activity">
    <reaction evidence="1">
        <text>UTP + NH4(+) + ATP = CTP + ADP + phosphate + 2 H(+)</text>
        <dbReference type="Rhea" id="RHEA:16597"/>
        <dbReference type="ChEBI" id="CHEBI:15378"/>
        <dbReference type="ChEBI" id="CHEBI:28938"/>
        <dbReference type="ChEBI" id="CHEBI:30616"/>
        <dbReference type="ChEBI" id="CHEBI:37563"/>
        <dbReference type="ChEBI" id="CHEBI:43474"/>
        <dbReference type="ChEBI" id="CHEBI:46398"/>
        <dbReference type="ChEBI" id="CHEBI:456216"/>
    </reaction>
</comment>
<comment type="activity regulation">
    <text evidence="1">Allosterically activated by GTP, when glutamine is the substrate; GTP has no effect on the reaction when ammonia is the substrate. The allosteric effector GTP functions by stabilizing the protein conformation that binds the tetrahedral intermediate(s) formed during glutamine hydrolysis. Inhibited by the product CTP, via allosteric rather than competitive inhibition.</text>
</comment>
<comment type="pathway">
    <text evidence="1">Pyrimidine metabolism; CTP biosynthesis via de novo pathway; CTP from UDP: step 2/2.</text>
</comment>
<comment type="subunit">
    <text evidence="1">Homotetramer.</text>
</comment>
<comment type="miscellaneous">
    <text evidence="1">CTPSs have evolved a hybrid strategy for distinguishing between UTP and CTP. The overlapping regions of the product feedback inhibitory and substrate sites recognize a common feature in both compounds, the triphosphate moiety. To differentiate isosteric substrate and product pyrimidine rings, an additional pocket far from the expected kinase/ligase catalytic site, specifically recognizes the cytosine and ribose portions of the product inhibitor.</text>
</comment>
<comment type="similarity">
    <text evidence="1">Belongs to the CTP synthase family.</text>
</comment>